<reference key="1">
    <citation type="journal article" date="2010" name="PLoS ONE">
        <title>Genome sequence of Cronobacter sakazakii BAA-894 and comparative genomic hybridization analysis with other Cronobacter species.</title>
        <authorList>
            <person name="Kucerova E."/>
            <person name="Clifton S.W."/>
            <person name="Xia X.Q."/>
            <person name="Long F."/>
            <person name="Porwollik S."/>
            <person name="Fulton L."/>
            <person name="Fronick C."/>
            <person name="Minx P."/>
            <person name="Kyung K."/>
            <person name="Warren W."/>
            <person name="Fulton R."/>
            <person name="Feng D."/>
            <person name="Wollam A."/>
            <person name="Shah N."/>
            <person name="Bhonagiri V."/>
            <person name="Nash W.E."/>
            <person name="Hallsworth-Pepin K."/>
            <person name="Wilson R.K."/>
            <person name="McClelland M."/>
            <person name="Forsythe S.J."/>
        </authorList>
    </citation>
    <scope>NUCLEOTIDE SEQUENCE [LARGE SCALE GENOMIC DNA]</scope>
    <source>
        <strain>ATCC BAA-894</strain>
    </source>
</reference>
<name>PXPA_CROS8</name>
<gene>
    <name evidence="1" type="primary">pxpA</name>
    <name type="ordered locus">ESA_02634</name>
</gene>
<accession>A7MQV7</accession>
<protein>
    <recommendedName>
        <fullName evidence="1">5-oxoprolinase subunit A</fullName>
        <shortName evidence="1">5-OPase subunit A</shortName>
        <ecNumber evidence="1">3.5.2.9</ecNumber>
    </recommendedName>
    <alternativeName>
        <fullName evidence="1">5-oxoprolinase (ATP-hydrolyzing) subunit A</fullName>
    </alternativeName>
</protein>
<organism>
    <name type="scientific">Cronobacter sakazakii (strain ATCC BAA-894)</name>
    <name type="common">Enterobacter sakazakii</name>
    <dbReference type="NCBI Taxonomy" id="290339"/>
    <lineage>
        <taxon>Bacteria</taxon>
        <taxon>Pseudomonadati</taxon>
        <taxon>Pseudomonadota</taxon>
        <taxon>Gammaproteobacteria</taxon>
        <taxon>Enterobacterales</taxon>
        <taxon>Enterobacteriaceae</taxon>
        <taxon>Cronobacter</taxon>
    </lineage>
</organism>
<feature type="chain" id="PRO_1000132057" description="5-oxoprolinase subunit A">
    <location>
        <begin position="1"/>
        <end position="245"/>
    </location>
</feature>
<proteinExistence type="inferred from homology"/>
<comment type="function">
    <text evidence="1">Catalyzes the cleavage of 5-oxoproline to form L-glutamate coupled to the hydrolysis of ATP to ADP and inorganic phosphate.</text>
</comment>
<comment type="catalytic activity">
    <reaction evidence="1">
        <text>5-oxo-L-proline + ATP + 2 H2O = L-glutamate + ADP + phosphate + H(+)</text>
        <dbReference type="Rhea" id="RHEA:10348"/>
        <dbReference type="ChEBI" id="CHEBI:15377"/>
        <dbReference type="ChEBI" id="CHEBI:15378"/>
        <dbReference type="ChEBI" id="CHEBI:29985"/>
        <dbReference type="ChEBI" id="CHEBI:30616"/>
        <dbReference type="ChEBI" id="CHEBI:43474"/>
        <dbReference type="ChEBI" id="CHEBI:58402"/>
        <dbReference type="ChEBI" id="CHEBI:456216"/>
        <dbReference type="EC" id="3.5.2.9"/>
    </reaction>
</comment>
<comment type="subunit">
    <text evidence="1">Forms a complex composed of PxpA, PxpB and PxpC.</text>
</comment>
<comment type="similarity">
    <text evidence="1">Belongs to the LamB/PxpA family.</text>
</comment>
<evidence type="ECO:0000255" key="1">
    <source>
        <dbReference type="HAMAP-Rule" id="MF_00691"/>
    </source>
</evidence>
<sequence length="245" mass="25997">MMKIDLNADLGEGCGNDALLMPLISSANIACGFHAGDAQTMRESVRLALAHGVAMGAHPGFADRENFGRTAMQLPPETIYAETLYQIGALAAIARAEGGRLAHVKPHGMLYNQAAKDAALADAIAQAVKDFDASLILVGLAGSELIRAGARYRLATREEVFADRGYLADGALVPRSEPGALIEDDDEAVSRTLMMVQEGRVRSRDGAWAAVNAQTVCLHGDGAHALAFARRLREAFDARQIQVSA</sequence>
<keyword id="KW-0067">ATP-binding</keyword>
<keyword id="KW-0378">Hydrolase</keyword>
<keyword id="KW-0547">Nucleotide-binding</keyword>
<keyword id="KW-1185">Reference proteome</keyword>
<dbReference type="EC" id="3.5.2.9" evidence="1"/>
<dbReference type="EMBL" id="CP000783">
    <property type="protein sequence ID" value="ABU77874.1"/>
    <property type="molecule type" value="Genomic_DNA"/>
</dbReference>
<dbReference type="SMR" id="A7MQV7"/>
<dbReference type="KEGG" id="esa:ESA_02634"/>
<dbReference type="HOGENOM" id="CLU_069535_0_0_6"/>
<dbReference type="Proteomes" id="UP000000260">
    <property type="component" value="Chromosome"/>
</dbReference>
<dbReference type="GO" id="GO:0017168">
    <property type="term" value="F:5-oxoprolinase (ATP-hydrolyzing) activity"/>
    <property type="evidence" value="ECO:0007669"/>
    <property type="project" value="UniProtKB-UniRule"/>
</dbReference>
<dbReference type="GO" id="GO:0005524">
    <property type="term" value="F:ATP binding"/>
    <property type="evidence" value="ECO:0007669"/>
    <property type="project" value="UniProtKB-UniRule"/>
</dbReference>
<dbReference type="GO" id="GO:0005975">
    <property type="term" value="P:carbohydrate metabolic process"/>
    <property type="evidence" value="ECO:0007669"/>
    <property type="project" value="InterPro"/>
</dbReference>
<dbReference type="Gene3D" id="3.20.20.370">
    <property type="entry name" value="Glycoside hydrolase/deacetylase"/>
    <property type="match status" value="1"/>
</dbReference>
<dbReference type="HAMAP" id="MF_00691">
    <property type="entry name" value="PxpA"/>
    <property type="match status" value="1"/>
</dbReference>
<dbReference type="InterPro" id="IPR011330">
    <property type="entry name" value="Glyco_hydro/deAcase_b/a-brl"/>
</dbReference>
<dbReference type="InterPro" id="IPR005501">
    <property type="entry name" value="LamB/YcsF/PxpA-like"/>
</dbReference>
<dbReference type="NCBIfam" id="NF003812">
    <property type="entry name" value="PRK05406.1-1"/>
    <property type="match status" value="1"/>
</dbReference>
<dbReference type="NCBIfam" id="NF003814">
    <property type="entry name" value="PRK05406.1-3"/>
    <property type="match status" value="1"/>
</dbReference>
<dbReference type="NCBIfam" id="NF003815">
    <property type="entry name" value="PRK05406.1-4"/>
    <property type="match status" value="1"/>
</dbReference>
<dbReference type="NCBIfam" id="NF003816">
    <property type="entry name" value="PRK05406.1-5"/>
    <property type="match status" value="1"/>
</dbReference>
<dbReference type="PANTHER" id="PTHR30292:SF0">
    <property type="entry name" value="5-OXOPROLINASE SUBUNIT A"/>
    <property type="match status" value="1"/>
</dbReference>
<dbReference type="PANTHER" id="PTHR30292">
    <property type="entry name" value="UNCHARACTERIZED PROTEIN YBGL-RELATED"/>
    <property type="match status" value="1"/>
</dbReference>
<dbReference type="Pfam" id="PF03746">
    <property type="entry name" value="LamB_YcsF"/>
    <property type="match status" value="1"/>
</dbReference>
<dbReference type="SUPFAM" id="SSF88713">
    <property type="entry name" value="Glycoside hydrolase/deacetylase"/>
    <property type="match status" value="1"/>
</dbReference>